<dbReference type="EMBL" id="CP000304">
    <property type="protein sequence ID" value="ABP78242.1"/>
    <property type="molecule type" value="Genomic_DNA"/>
</dbReference>
<dbReference type="RefSeq" id="WP_011911769.1">
    <property type="nucleotide sequence ID" value="NC_009434.1"/>
</dbReference>
<dbReference type="KEGG" id="psa:PST_0536"/>
<dbReference type="eggNOG" id="COG1671">
    <property type="taxonomic scope" value="Bacteria"/>
</dbReference>
<dbReference type="HOGENOM" id="CLU_106619_2_1_6"/>
<dbReference type="Proteomes" id="UP000000233">
    <property type="component" value="Chromosome"/>
</dbReference>
<dbReference type="CDD" id="cd18720">
    <property type="entry name" value="PIN_YqxD-like"/>
    <property type="match status" value="1"/>
</dbReference>
<dbReference type="HAMAP" id="MF_00489">
    <property type="entry name" value="UPF0178"/>
    <property type="match status" value="1"/>
</dbReference>
<dbReference type="InterPro" id="IPR003791">
    <property type="entry name" value="UPF0178"/>
</dbReference>
<dbReference type="NCBIfam" id="NF001095">
    <property type="entry name" value="PRK00124.1"/>
    <property type="match status" value="1"/>
</dbReference>
<dbReference type="PANTHER" id="PTHR35146">
    <property type="entry name" value="UPF0178 PROTEIN YAII"/>
    <property type="match status" value="1"/>
</dbReference>
<dbReference type="PANTHER" id="PTHR35146:SF1">
    <property type="entry name" value="UPF0178 PROTEIN YAII"/>
    <property type="match status" value="1"/>
</dbReference>
<dbReference type="Pfam" id="PF02639">
    <property type="entry name" value="DUF188"/>
    <property type="match status" value="1"/>
</dbReference>
<comment type="similarity">
    <text evidence="1">Belongs to the UPF0178 family.</text>
</comment>
<proteinExistence type="inferred from homology"/>
<gene>
    <name type="ordered locus">PST_0536</name>
</gene>
<name>Y536_STUS1</name>
<sequence length="151" mass="16591">MRVWIDADACPRAAKDQVIKFALKRKFEVLLVAGQSQVKPAFACVRLIVVPSGPDAADDYLVEHAEPGDLVICSDVPLADRLVKKGVAALDPRGRGFDERNMGERLAVRNLFTDLRDQGQVGGGQAAYGERDRQTFANALDRLLTRLSRSQ</sequence>
<organism>
    <name type="scientific">Stutzerimonas stutzeri (strain A1501)</name>
    <name type="common">Pseudomonas stutzeri</name>
    <dbReference type="NCBI Taxonomy" id="379731"/>
    <lineage>
        <taxon>Bacteria</taxon>
        <taxon>Pseudomonadati</taxon>
        <taxon>Pseudomonadota</taxon>
        <taxon>Gammaproteobacteria</taxon>
        <taxon>Pseudomonadales</taxon>
        <taxon>Pseudomonadaceae</taxon>
        <taxon>Stutzerimonas</taxon>
    </lineage>
</organism>
<reference key="1">
    <citation type="journal article" date="2008" name="Proc. Natl. Acad. Sci. U.S.A.">
        <title>Nitrogen fixation island and rhizosphere competence traits in the genome of root-associated Pseudomonas stutzeri A1501.</title>
        <authorList>
            <person name="Yan Y."/>
            <person name="Yang J."/>
            <person name="Dou Y."/>
            <person name="Chen M."/>
            <person name="Ping S."/>
            <person name="Peng J."/>
            <person name="Lu W."/>
            <person name="Zhang W."/>
            <person name="Yao Z."/>
            <person name="Li H."/>
            <person name="Liu W."/>
            <person name="He S."/>
            <person name="Geng L."/>
            <person name="Zhang X."/>
            <person name="Yang F."/>
            <person name="Yu H."/>
            <person name="Zhan Y."/>
            <person name="Li D."/>
            <person name="Lin Z."/>
            <person name="Wang Y."/>
            <person name="Elmerich C."/>
            <person name="Lin M."/>
            <person name="Jin Q."/>
        </authorList>
    </citation>
    <scope>NUCLEOTIDE SEQUENCE [LARGE SCALE GENOMIC DNA]</scope>
    <source>
        <strain>A1501</strain>
    </source>
</reference>
<feature type="chain" id="PRO_1000014434" description="UPF0178 protein PST_0536">
    <location>
        <begin position="1"/>
        <end position="151"/>
    </location>
</feature>
<keyword id="KW-1185">Reference proteome</keyword>
<evidence type="ECO:0000255" key="1">
    <source>
        <dbReference type="HAMAP-Rule" id="MF_00489"/>
    </source>
</evidence>
<protein>
    <recommendedName>
        <fullName evidence="1">UPF0178 protein PST_0536</fullName>
    </recommendedName>
</protein>
<accession>A4VGZ1</accession>